<sequence length="316" mass="35170">MNDVSKASLPKAIFLMGPTASGKTALAIELRKVLPVELISVDSALIYRGMDIGTAKPNADELKAAPHRLLDIRDPSQAYSAADFRRDALAQMAEITAAGRIPLLVGGTMLYFKALLEGLSPLPSADPEVRSRIEQQAAELGWEALHQQLQEIDPVAAARIHPNDPQRLSRALEVFFISGKTLTELTQTSGDALPYQVHQFAIAPASRELLHQRIELRFHQMLASGFEAEVRALFARGDLHTDLPSIRCVGYRQMWSYIEGEISYDEMVYRGVCATRQLAKRQMTWLRGWEGVRWLDSENPDRARKEVLQVVGAIAD</sequence>
<accession>B5FRM7</accession>
<feature type="chain" id="PRO_1000098682" description="tRNA dimethylallyltransferase">
    <location>
        <begin position="1"/>
        <end position="316"/>
    </location>
</feature>
<feature type="region of interest" description="Interaction with substrate tRNA" evidence="1">
    <location>
        <begin position="42"/>
        <end position="45"/>
    </location>
</feature>
<feature type="region of interest" description="Interaction with substrate tRNA" evidence="1">
    <location>
        <begin position="166"/>
        <end position="170"/>
    </location>
</feature>
<feature type="region of interest" description="Interaction with substrate tRNA" evidence="1">
    <location>
        <begin position="247"/>
        <end position="252"/>
    </location>
</feature>
<feature type="binding site" evidence="1">
    <location>
        <begin position="17"/>
        <end position="24"/>
    </location>
    <ligand>
        <name>ATP</name>
        <dbReference type="ChEBI" id="CHEBI:30616"/>
    </ligand>
</feature>
<feature type="binding site" evidence="1">
    <location>
        <begin position="19"/>
        <end position="24"/>
    </location>
    <ligand>
        <name>substrate</name>
    </ligand>
</feature>
<feature type="site" description="Interaction with substrate tRNA" evidence="1">
    <location>
        <position position="108"/>
    </location>
</feature>
<feature type="site" description="Interaction with substrate tRNA" evidence="1">
    <location>
        <position position="130"/>
    </location>
</feature>
<protein>
    <recommendedName>
        <fullName evidence="1">tRNA dimethylallyltransferase</fullName>
        <ecNumber evidence="1">2.5.1.75</ecNumber>
    </recommendedName>
    <alternativeName>
        <fullName evidence="1">Dimethylallyl diphosphate:tRNA dimethylallyltransferase</fullName>
        <shortName evidence="1">DMAPP:tRNA dimethylallyltransferase</shortName>
        <shortName evidence="1">DMATase</shortName>
    </alternativeName>
    <alternativeName>
        <fullName evidence="1">Isopentenyl-diphosphate:tRNA isopentenyltransferase</fullName>
        <shortName evidence="1">IPP transferase</shortName>
        <shortName evidence="1">IPPT</shortName>
        <shortName evidence="1">IPTase</shortName>
    </alternativeName>
</protein>
<evidence type="ECO:0000255" key="1">
    <source>
        <dbReference type="HAMAP-Rule" id="MF_00185"/>
    </source>
</evidence>
<name>MIAA_SALDC</name>
<reference key="1">
    <citation type="journal article" date="2011" name="J. Bacteriol.">
        <title>Comparative genomics of 28 Salmonella enterica isolates: evidence for CRISPR-mediated adaptive sublineage evolution.</title>
        <authorList>
            <person name="Fricke W.F."/>
            <person name="Mammel M.K."/>
            <person name="McDermott P.F."/>
            <person name="Tartera C."/>
            <person name="White D.G."/>
            <person name="Leclerc J.E."/>
            <person name="Ravel J."/>
            <person name="Cebula T.A."/>
        </authorList>
    </citation>
    <scope>NUCLEOTIDE SEQUENCE [LARGE SCALE GENOMIC DNA]</scope>
    <source>
        <strain>CT_02021853</strain>
    </source>
</reference>
<keyword id="KW-0067">ATP-binding</keyword>
<keyword id="KW-0460">Magnesium</keyword>
<keyword id="KW-0547">Nucleotide-binding</keyword>
<keyword id="KW-0808">Transferase</keyword>
<keyword id="KW-0819">tRNA processing</keyword>
<organism>
    <name type="scientific">Salmonella dublin (strain CT_02021853)</name>
    <dbReference type="NCBI Taxonomy" id="439851"/>
    <lineage>
        <taxon>Bacteria</taxon>
        <taxon>Pseudomonadati</taxon>
        <taxon>Pseudomonadota</taxon>
        <taxon>Gammaproteobacteria</taxon>
        <taxon>Enterobacterales</taxon>
        <taxon>Enterobacteriaceae</taxon>
        <taxon>Salmonella</taxon>
    </lineage>
</organism>
<gene>
    <name evidence="1" type="primary">miaA</name>
    <name type="ordered locus">SeD_A4757</name>
</gene>
<proteinExistence type="inferred from homology"/>
<comment type="function">
    <text evidence="1">Catalyzes the transfer of a dimethylallyl group onto the adenine at position 37 in tRNAs that read codons beginning with uridine, leading to the formation of N6-(dimethylallyl)adenosine (i(6)A).</text>
</comment>
<comment type="catalytic activity">
    <reaction evidence="1">
        <text>adenosine(37) in tRNA + dimethylallyl diphosphate = N(6)-dimethylallyladenosine(37) in tRNA + diphosphate</text>
        <dbReference type="Rhea" id="RHEA:26482"/>
        <dbReference type="Rhea" id="RHEA-COMP:10162"/>
        <dbReference type="Rhea" id="RHEA-COMP:10375"/>
        <dbReference type="ChEBI" id="CHEBI:33019"/>
        <dbReference type="ChEBI" id="CHEBI:57623"/>
        <dbReference type="ChEBI" id="CHEBI:74411"/>
        <dbReference type="ChEBI" id="CHEBI:74415"/>
        <dbReference type="EC" id="2.5.1.75"/>
    </reaction>
</comment>
<comment type="cofactor">
    <cofactor evidence="1">
        <name>Mg(2+)</name>
        <dbReference type="ChEBI" id="CHEBI:18420"/>
    </cofactor>
</comment>
<comment type="subunit">
    <text evidence="1">Monomer.</text>
</comment>
<comment type="similarity">
    <text evidence="1">Belongs to the IPP transferase family.</text>
</comment>
<dbReference type="EC" id="2.5.1.75" evidence="1"/>
<dbReference type="EMBL" id="CP001144">
    <property type="protein sequence ID" value="ACH74269.1"/>
    <property type="molecule type" value="Genomic_DNA"/>
</dbReference>
<dbReference type="RefSeq" id="WP_001000734.1">
    <property type="nucleotide sequence ID" value="NC_011205.1"/>
</dbReference>
<dbReference type="SMR" id="B5FRM7"/>
<dbReference type="KEGG" id="sed:SeD_A4757"/>
<dbReference type="HOGENOM" id="CLU_032616_0_0_6"/>
<dbReference type="Proteomes" id="UP000008322">
    <property type="component" value="Chromosome"/>
</dbReference>
<dbReference type="GO" id="GO:0005524">
    <property type="term" value="F:ATP binding"/>
    <property type="evidence" value="ECO:0007669"/>
    <property type="project" value="UniProtKB-UniRule"/>
</dbReference>
<dbReference type="GO" id="GO:0052381">
    <property type="term" value="F:tRNA dimethylallyltransferase activity"/>
    <property type="evidence" value="ECO:0007669"/>
    <property type="project" value="UniProtKB-UniRule"/>
</dbReference>
<dbReference type="GO" id="GO:0006400">
    <property type="term" value="P:tRNA modification"/>
    <property type="evidence" value="ECO:0007669"/>
    <property type="project" value="TreeGrafter"/>
</dbReference>
<dbReference type="FunFam" id="1.10.20.140:FF:000001">
    <property type="entry name" value="tRNA dimethylallyltransferase"/>
    <property type="match status" value="1"/>
</dbReference>
<dbReference type="FunFam" id="1.10.287.890:FF:000001">
    <property type="entry name" value="tRNA dimethylallyltransferase"/>
    <property type="match status" value="1"/>
</dbReference>
<dbReference type="Gene3D" id="1.10.20.140">
    <property type="match status" value="1"/>
</dbReference>
<dbReference type="Gene3D" id="1.10.287.890">
    <property type="entry name" value="Crystal structure of tRNA isopentenylpyrophosphate transferase (bh2366) domain"/>
    <property type="match status" value="1"/>
</dbReference>
<dbReference type="Gene3D" id="3.40.50.300">
    <property type="entry name" value="P-loop containing nucleotide triphosphate hydrolases"/>
    <property type="match status" value="1"/>
</dbReference>
<dbReference type="HAMAP" id="MF_00185">
    <property type="entry name" value="IPP_trans"/>
    <property type="match status" value="1"/>
</dbReference>
<dbReference type="InterPro" id="IPR039657">
    <property type="entry name" value="Dimethylallyltransferase"/>
</dbReference>
<dbReference type="InterPro" id="IPR018022">
    <property type="entry name" value="IPT"/>
</dbReference>
<dbReference type="InterPro" id="IPR027417">
    <property type="entry name" value="P-loop_NTPase"/>
</dbReference>
<dbReference type="NCBIfam" id="TIGR00174">
    <property type="entry name" value="miaA"/>
    <property type="match status" value="1"/>
</dbReference>
<dbReference type="PANTHER" id="PTHR11088">
    <property type="entry name" value="TRNA DIMETHYLALLYLTRANSFERASE"/>
    <property type="match status" value="1"/>
</dbReference>
<dbReference type="PANTHER" id="PTHR11088:SF60">
    <property type="entry name" value="TRNA DIMETHYLALLYLTRANSFERASE"/>
    <property type="match status" value="1"/>
</dbReference>
<dbReference type="Pfam" id="PF01715">
    <property type="entry name" value="IPPT"/>
    <property type="match status" value="1"/>
</dbReference>
<dbReference type="SUPFAM" id="SSF52540">
    <property type="entry name" value="P-loop containing nucleoside triphosphate hydrolases"/>
    <property type="match status" value="1"/>
</dbReference>